<organism>
    <name type="scientific">Mus musculus</name>
    <name type="common">Mouse</name>
    <dbReference type="NCBI Taxonomy" id="10090"/>
    <lineage>
        <taxon>Eukaryota</taxon>
        <taxon>Metazoa</taxon>
        <taxon>Chordata</taxon>
        <taxon>Craniata</taxon>
        <taxon>Vertebrata</taxon>
        <taxon>Euteleostomi</taxon>
        <taxon>Mammalia</taxon>
        <taxon>Eutheria</taxon>
        <taxon>Euarchontoglires</taxon>
        <taxon>Glires</taxon>
        <taxon>Rodentia</taxon>
        <taxon>Myomorpha</taxon>
        <taxon>Muroidea</taxon>
        <taxon>Muridae</taxon>
        <taxon>Murinae</taxon>
        <taxon>Mus</taxon>
        <taxon>Mus</taxon>
    </lineage>
</organism>
<accession>Q3UEZ8</accession>
<accession>Q8BJC7</accession>
<proteinExistence type="evidence at transcript level"/>
<reference key="1">
    <citation type="journal article" date="2005" name="Science">
        <title>The transcriptional landscape of the mammalian genome.</title>
        <authorList>
            <person name="Carninci P."/>
            <person name="Kasukawa T."/>
            <person name="Katayama S."/>
            <person name="Gough J."/>
            <person name="Frith M.C."/>
            <person name="Maeda N."/>
            <person name="Oyama R."/>
            <person name="Ravasi T."/>
            <person name="Lenhard B."/>
            <person name="Wells C."/>
            <person name="Kodzius R."/>
            <person name="Shimokawa K."/>
            <person name="Bajic V.B."/>
            <person name="Brenner S.E."/>
            <person name="Batalov S."/>
            <person name="Forrest A.R."/>
            <person name="Zavolan M."/>
            <person name="Davis M.J."/>
            <person name="Wilming L.G."/>
            <person name="Aidinis V."/>
            <person name="Allen J.E."/>
            <person name="Ambesi-Impiombato A."/>
            <person name="Apweiler R."/>
            <person name="Aturaliya R.N."/>
            <person name="Bailey T.L."/>
            <person name="Bansal M."/>
            <person name="Baxter L."/>
            <person name="Beisel K.W."/>
            <person name="Bersano T."/>
            <person name="Bono H."/>
            <person name="Chalk A.M."/>
            <person name="Chiu K.P."/>
            <person name="Choudhary V."/>
            <person name="Christoffels A."/>
            <person name="Clutterbuck D.R."/>
            <person name="Crowe M.L."/>
            <person name="Dalla E."/>
            <person name="Dalrymple B.P."/>
            <person name="de Bono B."/>
            <person name="Della Gatta G."/>
            <person name="di Bernardo D."/>
            <person name="Down T."/>
            <person name="Engstrom P."/>
            <person name="Fagiolini M."/>
            <person name="Faulkner G."/>
            <person name="Fletcher C.F."/>
            <person name="Fukushima T."/>
            <person name="Furuno M."/>
            <person name="Futaki S."/>
            <person name="Gariboldi M."/>
            <person name="Georgii-Hemming P."/>
            <person name="Gingeras T.R."/>
            <person name="Gojobori T."/>
            <person name="Green R.E."/>
            <person name="Gustincich S."/>
            <person name="Harbers M."/>
            <person name="Hayashi Y."/>
            <person name="Hensch T.K."/>
            <person name="Hirokawa N."/>
            <person name="Hill D."/>
            <person name="Huminiecki L."/>
            <person name="Iacono M."/>
            <person name="Ikeo K."/>
            <person name="Iwama A."/>
            <person name="Ishikawa T."/>
            <person name="Jakt M."/>
            <person name="Kanapin A."/>
            <person name="Katoh M."/>
            <person name="Kawasawa Y."/>
            <person name="Kelso J."/>
            <person name="Kitamura H."/>
            <person name="Kitano H."/>
            <person name="Kollias G."/>
            <person name="Krishnan S.P."/>
            <person name="Kruger A."/>
            <person name="Kummerfeld S.K."/>
            <person name="Kurochkin I.V."/>
            <person name="Lareau L.F."/>
            <person name="Lazarevic D."/>
            <person name="Lipovich L."/>
            <person name="Liu J."/>
            <person name="Liuni S."/>
            <person name="McWilliam S."/>
            <person name="Madan Babu M."/>
            <person name="Madera M."/>
            <person name="Marchionni L."/>
            <person name="Matsuda H."/>
            <person name="Matsuzawa S."/>
            <person name="Miki H."/>
            <person name="Mignone F."/>
            <person name="Miyake S."/>
            <person name="Morris K."/>
            <person name="Mottagui-Tabar S."/>
            <person name="Mulder N."/>
            <person name="Nakano N."/>
            <person name="Nakauchi H."/>
            <person name="Ng P."/>
            <person name="Nilsson R."/>
            <person name="Nishiguchi S."/>
            <person name="Nishikawa S."/>
            <person name="Nori F."/>
            <person name="Ohara O."/>
            <person name="Okazaki Y."/>
            <person name="Orlando V."/>
            <person name="Pang K.C."/>
            <person name="Pavan W.J."/>
            <person name="Pavesi G."/>
            <person name="Pesole G."/>
            <person name="Petrovsky N."/>
            <person name="Piazza S."/>
            <person name="Reed J."/>
            <person name="Reid J.F."/>
            <person name="Ring B.Z."/>
            <person name="Ringwald M."/>
            <person name="Rost B."/>
            <person name="Ruan Y."/>
            <person name="Salzberg S.L."/>
            <person name="Sandelin A."/>
            <person name="Schneider C."/>
            <person name="Schoenbach C."/>
            <person name="Sekiguchi K."/>
            <person name="Semple C.A."/>
            <person name="Seno S."/>
            <person name="Sessa L."/>
            <person name="Sheng Y."/>
            <person name="Shibata Y."/>
            <person name="Shimada H."/>
            <person name="Shimada K."/>
            <person name="Silva D."/>
            <person name="Sinclair B."/>
            <person name="Sperling S."/>
            <person name="Stupka E."/>
            <person name="Sugiura K."/>
            <person name="Sultana R."/>
            <person name="Takenaka Y."/>
            <person name="Taki K."/>
            <person name="Tammoja K."/>
            <person name="Tan S.L."/>
            <person name="Tang S."/>
            <person name="Taylor M.S."/>
            <person name="Tegner J."/>
            <person name="Teichmann S.A."/>
            <person name="Ueda H.R."/>
            <person name="van Nimwegen E."/>
            <person name="Verardo R."/>
            <person name="Wei C.L."/>
            <person name="Yagi K."/>
            <person name="Yamanishi H."/>
            <person name="Zabarovsky E."/>
            <person name="Zhu S."/>
            <person name="Zimmer A."/>
            <person name="Hide W."/>
            <person name="Bult C."/>
            <person name="Grimmond S.M."/>
            <person name="Teasdale R.D."/>
            <person name="Liu E.T."/>
            <person name="Brusic V."/>
            <person name="Quackenbush J."/>
            <person name="Wahlestedt C."/>
            <person name="Mattick J.S."/>
            <person name="Hume D.A."/>
            <person name="Kai C."/>
            <person name="Sasaki D."/>
            <person name="Tomaru Y."/>
            <person name="Fukuda S."/>
            <person name="Kanamori-Katayama M."/>
            <person name="Suzuki M."/>
            <person name="Aoki J."/>
            <person name="Arakawa T."/>
            <person name="Iida J."/>
            <person name="Imamura K."/>
            <person name="Itoh M."/>
            <person name="Kato T."/>
            <person name="Kawaji H."/>
            <person name="Kawagashira N."/>
            <person name="Kawashima T."/>
            <person name="Kojima M."/>
            <person name="Kondo S."/>
            <person name="Konno H."/>
            <person name="Nakano K."/>
            <person name="Ninomiya N."/>
            <person name="Nishio T."/>
            <person name="Okada M."/>
            <person name="Plessy C."/>
            <person name="Shibata K."/>
            <person name="Shiraki T."/>
            <person name="Suzuki S."/>
            <person name="Tagami M."/>
            <person name="Waki K."/>
            <person name="Watahiki A."/>
            <person name="Okamura-Oho Y."/>
            <person name="Suzuki H."/>
            <person name="Kawai J."/>
            <person name="Hayashizaki Y."/>
        </authorList>
    </citation>
    <scope>NUCLEOTIDE SEQUENCE [LARGE SCALE MRNA]</scope>
    <source>
        <strain>C57BL/6J</strain>
        <tissue>Eye</tissue>
        <tissue>Sympathetic ganglion</tissue>
    </source>
</reference>
<reference key="2">
    <citation type="journal article" date="2008" name="Neuroscience">
        <title>Cloning and molecular characterization of the orphan carrier protein Slc10a4: expression in cholinergic neurons of the rat central nervous system.</title>
        <authorList>
            <person name="Geyer J."/>
            <person name="Fernandes C.F."/>
            <person name="Doring B."/>
            <person name="Burger S."/>
            <person name="Godoy J.R."/>
            <person name="Rafalzik S."/>
            <person name="Hubschle T."/>
            <person name="Gerstberger R."/>
            <person name="Petzinger E."/>
        </authorList>
    </citation>
    <scope>TISSUE SPECIFICITY</scope>
</reference>
<dbReference type="EMBL" id="AK087479">
    <property type="protein sequence ID" value="BAC39890.1"/>
    <property type="molecule type" value="mRNA"/>
</dbReference>
<dbReference type="EMBL" id="AK149202">
    <property type="protein sequence ID" value="BAE28763.1"/>
    <property type="molecule type" value="mRNA"/>
</dbReference>
<dbReference type="CCDS" id="CCDS19336.1"/>
<dbReference type="RefSeq" id="NP_775579.2">
    <property type="nucleotide sequence ID" value="NM_173403.2"/>
</dbReference>
<dbReference type="SMR" id="Q3UEZ8"/>
<dbReference type="FunCoup" id="Q3UEZ8">
    <property type="interactions" value="8"/>
</dbReference>
<dbReference type="STRING" id="10090.ENSMUSP00000031127"/>
<dbReference type="GlyCosmos" id="Q3UEZ8">
    <property type="glycosylation" value="4 sites, No reported glycans"/>
</dbReference>
<dbReference type="GlyGen" id="Q3UEZ8">
    <property type="glycosylation" value="6 sites"/>
</dbReference>
<dbReference type="PhosphoSitePlus" id="Q3UEZ8"/>
<dbReference type="PaxDb" id="10090-ENSMUSP00000031127"/>
<dbReference type="ProteomicsDB" id="253031"/>
<dbReference type="DNASU" id="231290"/>
<dbReference type="Ensembl" id="ENSMUST00000031127.11">
    <property type="protein sequence ID" value="ENSMUSP00000031127.8"/>
    <property type="gene ID" value="ENSMUSG00000029219.11"/>
</dbReference>
<dbReference type="GeneID" id="231290"/>
<dbReference type="KEGG" id="mmu:231290"/>
<dbReference type="UCSC" id="uc008xsk.1">
    <property type="organism name" value="mouse"/>
</dbReference>
<dbReference type="AGR" id="MGI:3606480"/>
<dbReference type="CTD" id="201780"/>
<dbReference type="MGI" id="MGI:3606480">
    <property type="gene designation" value="Slc10a4"/>
</dbReference>
<dbReference type="VEuPathDB" id="HostDB:ENSMUSG00000029219"/>
<dbReference type="eggNOG" id="KOG2718">
    <property type="taxonomic scope" value="Eukaryota"/>
</dbReference>
<dbReference type="GeneTree" id="ENSGT00950000182808"/>
<dbReference type="HOGENOM" id="CLU_034788_7_3_1"/>
<dbReference type="InParanoid" id="Q3UEZ8"/>
<dbReference type="OMA" id="NIMMETT"/>
<dbReference type="OrthoDB" id="203097at2759"/>
<dbReference type="PhylomeDB" id="Q3UEZ8"/>
<dbReference type="TreeFam" id="TF315811"/>
<dbReference type="BioGRID-ORCS" id="231290">
    <property type="hits" value="1 hit in 79 CRISPR screens"/>
</dbReference>
<dbReference type="PRO" id="PR:Q3UEZ8"/>
<dbReference type="Proteomes" id="UP000000589">
    <property type="component" value="Chromosome 5"/>
</dbReference>
<dbReference type="RNAct" id="Q3UEZ8">
    <property type="molecule type" value="protein"/>
</dbReference>
<dbReference type="Bgee" id="ENSMUSG00000029219">
    <property type="expression patterns" value="Expressed in neural tube and 63 other cell types or tissues"/>
</dbReference>
<dbReference type="ExpressionAtlas" id="Q3UEZ8">
    <property type="expression patterns" value="baseline and differential"/>
</dbReference>
<dbReference type="GO" id="GO:0098981">
    <property type="term" value="C:cholinergic synapse"/>
    <property type="evidence" value="ECO:0000314"/>
    <property type="project" value="SynGO"/>
</dbReference>
<dbReference type="GO" id="GO:0098691">
    <property type="term" value="C:dopaminergic synapse"/>
    <property type="evidence" value="ECO:0000314"/>
    <property type="project" value="SynGO"/>
</dbReference>
<dbReference type="GO" id="GO:0005886">
    <property type="term" value="C:plasma membrane"/>
    <property type="evidence" value="ECO:0007669"/>
    <property type="project" value="UniProtKB-SubCell"/>
</dbReference>
<dbReference type="GO" id="GO:0099154">
    <property type="term" value="C:serotonergic synapse"/>
    <property type="evidence" value="ECO:0000314"/>
    <property type="project" value="SynGO"/>
</dbReference>
<dbReference type="GO" id="GO:0030672">
    <property type="term" value="C:synaptic vesicle membrane"/>
    <property type="evidence" value="ECO:0000314"/>
    <property type="project" value="SynGO"/>
</dbReference>
<dbReference type="GO" id="GO:0015293">
    <property type="term" value="F:symporter activity"/>
    <property type="evidence" value="ECO:0007669"/>
    <property type="project" value="UniProtKB-KW"/>
</dbReference>
<dbReference type="GO" id="GO:0030534">
    <property type="term" value="P:adult behavior"/>
    <property type="evidence" value="ECO:0000315"/>
    <property type="project" value="MGI"/>
</dbReference>
<dbReference type="GO" id="GO:0099162">
    <property type="term" value="P:regulation of neurotransmitter loading into synaptic vesicle"/>
    <property type="evidence" value="ECO:0000314"/>
    <property type="project" value="SynGO"/>
</dbReference>
<dbReference type="GO" id="GO:0009410">
    <property type="term" value="P:response to xenobiotic stimulus"/>
    <property type="evidence" value="ECO:0000315"/>
    <property type="project" value="MGI"/>
</dbReference>
<dbReference type="GO" id="GO:0006814">
    <property type="term" value="P:sodium ion transport"/>
    <property type="evidence" value="ECO:0007669"/>
    <property type="project" value="UniProtKB-KW"/>
</dbReference>
<dbReference type="FunFam" id="1.20.1530.20:FF:000013">
    <property type="entry name" value="sodium/bile acid cotransporter 4"/>
    <property type="match status" value="1"/>
</dbReference>
<dbReference type="Gene3D" id="1.20.1530.20">
    <property type="match status" value="1"/>
</dbReference>
<dbReference type="InterPro" id="IPR002657">
    <property type="entry name" value="BilAc:Na_symport/Acr3"/>
</dbReference>
<dbReference type="InterPro" id="IPR004710">
    <property type="entry name" value="Bilac:Na_transpt"/>
</dbReference>
<dbReference type="InterPro" id="IPR038770">
    <property type="entry name" value="Na+/solute_symporter_sf"/>
</dbReference>
<dbReference type="PANTHER" id="PTHR10361">
    <property type="entry name" value="SODIUM-BILE ACID COTRANSPORTER"/>
    <property type="match status" value="1"/>
</dbReference>
<dbReference type="PANTHER" id="PTHR10361:SF41">
    <property type="entry name" value="SODIUM_BILE ACID COTRANSPORTER 4"/>
    <property type="match status" value="1"/>
</dbReference>
<dbReference type="Pfam" id="PF01758">
    <property type="entry name" value="SBF"/>
    <property type="match status" value="1"/>
</dbReference>
<gene>
    <name type="primary">Slc10a4</name>
</gene>
<evidence type="ECO:0000250" key="1"/>
<evidence type="ECO:0000255" key="2"/>
<evidence type="ECO:0000256" key="3">
    <source>
        <dbReference type="SAM" id="MobiDB-lite"/>
    </source>
</evidence>
<evidence type="ECO:0000269" key="4">
    <source>
    </source>
</evidence>
<evidence type="ECO:0000305" key="5"/>
<comment type="function">
    <text evidence="1">Transporter for bile acids.</text>
</comment>
<comment type="subcellular location">
    <subcellularLocation>
        <location evidence="1">Cell membrane</location>
        <topology evidence="1">Multi-pass membrane protein</topology>
    </subcellularLocation>
</comment>
<comment type="tissue specificity">
    <text evidence="4">Highest expression in the brain and significantly above background levels in the eye, prostate, and whole embryo tissue preparations.</text>
</comment>
<comment type="PTM">
    <text evidence="1">Activated following N-terminal proteolytic cleavage by thrombin and/or proteases.</text>
</comment>
<comment type="similarity">
    <text evidence="5">Belongs to the bile acid:sodium symporter (BASS) (TC 2.A.28) family.</text>
</comment>
<sequence>MDSLDNTTLLLAPSSLLPDNLTLSPNAGSPSASTLSPLAVTSSPGPGLSLAPSPSIGFSPEATPTPEPTSSSLTVGVAGQGSSAFPRPWIPHEPPFWDTPLNHGLNVFVGAALCITMLGLGCTVDVNHFGAHVRRPVGALLAALCQFGFLPLLAFLLALIFKLDEVAAVAVLLCGCCPGGNLSNLMSLLVDGDMNLSIIMTISSTLLALVLMPLCLWIYSRAWINTPLVQLLPLGAVTLTLCSTLIPIGLGVFIRYKYNRVADYIVKVSLWSLLVTLVVLFIMTGTMLGPELLASIPATVYVVAIFMPLAGYASGYGLATLFHLPPNCKRTVCLETGSQNVQLCTAILKLAFPPRFIGSMYMFPLLYALFQSAEAGVFVLIYKMYGSEILHKREALDEDEDTDISYKKLKEEEMADTSYGTVGTDDLVMMETTQTAL</sequence>
<keyword id="KW-1003">Cell membrane</keyword>
<keyword id="KW-0325">Glycoprotein</keyword>
<keyword id="KW-0406">Ion transport</keyword>
<keyword id="KW-0472">Membrane</keyword>
<keyword id="KW-1185">Reference proteome</keyword>
<keyword id="KW-0915">Sodium</keyword>
<keyword id="KW-0739">Sodium transport</keyword>
<keyword id="KW-0769">Symport</keyword>
<keyword id="KW-0812">Transmembrane</keyword>
<keyword id="KW-1133">Transmembrane helix</keyword>
<keyword id="KW-0813">Transport</keyword>
<feature type="chain" id="PRO_0000263743" description="Sodium/bile acid cotransporter 4">
    <location>
        <begin position="1"/>
        <end position="437"/>
    </location>
</feature>
<feature type="topological domain" description="Extracellular" evidence="2">
    <location>
        <begin position="1"/>
        <end position="103"/>
    </location>
</feature>
<feature type="transmembrane region" description="Helical" evidence="2">
    <location>
        <begin position="104"/>
        <end position="124"/>
    </location>
</feature>
<feature type="topological domain" description="Cytoplasmic" evidence="2">
    <location>
        <begin position="125"/>
        <end position="140"/>
    </location>
</feature>
<feature type="transmembrane region" description="Helical" evidence="2">
    <location>
        <begin position="141"/>
        <end position="161"/>
    </location>
</feature>
<feature type="topological domain" description="Extracellular" evidence="2">
    <location>
        <begin position="162"/>
        <end position="197"/>
    </location>
</feature>
<feature type="transmembrane region" description="Helical" evidence="2">
    <location>
        <begin position="198"/>
        <end position="218"/>
    </location>
</feature>
<feature type="topological domain" description="Cytoplasmic" evidence="2">
    <location>
        <begin position="219"/>
        <end position="233"/>
    </location>
</feature>
<feature type="transmembrane region" description="Helical" evidence="2">
    <location>
        <begin position="234"/>
        <end position="254"/>
    </location>
</feature>
<feature type="topological domain" description="Extracellular" evidence="2">
    <location>
        <begin position="255"/>
        <end position="267"/>
    </location>
</feature>
<feature type="transmembrane region" description="Helical" evidence="2">
    <location>
        <begin position="268"/>
        <end position="288"/>
    </location>
</feature>
<feature type="topological domain" description="Cytoplasmic" evidence="2">
    <location>
        <begin position="289"/>
        <end position="291"/>
    </location>
</feature>
<feature type="transmembrane region" description="Helical" evidence="2">
    <location>
        <begin position="292"/>
        <end position="312"/>
    </location>
</feature>
<feature type="topological domain" description="Extracellular" evidence="2">
    <location>
        <begin position="313"/>
        <end position="360"/>
    </location>
</feature>
<feature type="transmembrane region" description="Helical" evidence="2">
    <location>
        <begin position="361"/>
        <end position="381"/>
    </location>
</feature>
<feature type="topological domain" description="Cytoplasmic" evidence="2">
    <location>
        <begin position="382"/>
        <end position="437"/>
    </location>
</feature>
<feature type="region of interest" description="Disordered" evidence="3">
    <location>
        <begin position="15"/>
        <end position="79"/>
    </location>
</feature>
<feature type="compositionally biased region" description="Polar residues" evidence="3">
    <location>
        <begin position="22"/>
        <end position="41"/>
    </location>
</feature>
<feature type="compositionally biased region" description="Low complexity" evidence="3">
    <location>
        <begin position="42"/>
        <end position="74"/>
    </location>
</feature>
<feature type="site" description="Cleavage; by thrombin" evidence="1">
    <location>
        <begin position="87"/>
        <end position="88"/>
    </location>
</feature>
<feature type="glycosylation site" description="N-linked (GlcNAc...) asparagine" evidence="2">
    <location>
        <position position="6"/>
    </location>
</feature>
<feature type="glycosylation site" description="N-linked (GlcNAc...) asparagine" evidence="2">
    <location>
        <position position="20"/>
    </location>
</feature>
<feature type="glycosylation site" description="N-linked (GlcNAc...) asparagine" evidence="2">
    <location>
        <position position="181"/>
    </location>
</feature>
<feature type="glycosylation site" description="N-linked (GlcNAc...) asparagine" evidence="2">
    <location>
        <position position="195"/>
    </location>
</feature>
<feature type="sequence conflict" description="In Ref. 1; BAC39890." evidence="5" ref="1">
    <original>V</original>
    <variation>G</variation>
    <location>
        <position position="422"/>
    </location>
</feature>
<protein>
    <recommendedName>
        <fullName>Sodium/bile acid cotransporter 4</fullName>
    </recommendedName>
    <alternativeName>
        <fullName>Na(+)/bile acid cotransporter 4</fullName>
    </alternativeName>
    <alternativeName>
        <fullName>Solute carrier family 10 member 4</fullName>
    </alternativeName>
</protein>
<name>NTCP4_MOUSE</name>